<sequence>MECHNQQSSQPPTTKTCPGETNCYKKQWSDHRGTIIERGCGCPSVKKGVKINCCTTDRCNN</sequence>
<protein>
    <recommendedName>
        <fullName>Short neurotoxin 1</fullName>
    </recommendedName>
    <alternativeName>
        <fullName>Neurotoxin D</fullName>
    </alternativeName>
</protein>
<reference key="1">
    <citation type="journal article" date="1972" name="J. Biol. Chem.">
        <title>Snake venom toxins. The amino acid sequences of toxins b and d from Naja melanoleuca venom.</title>
        <authorList>
            <person name="Botes D.P."/>
        </authorList>
    </citation>
    <scope>PROTEIN SEQUENCE</scope>
    <scope>SUBCELLULAR LOCATION</scope>
    <source>
        <tissue>Venom</tissue>
    </source>
</reference>
<proteinExistence type="evidence at protein level"/>
<dbReference type="PIR" id="A01693">
    <property type="entry name" value="N1NJ1W"/>
</dbReference>
<dbReference type="SMR" id="P01424"/>
<dbReference type="GO" id="GO:0005576">
    <property type="term" value="C:extracellular region"/>
    <property type="evidence" value="ECO:0007669"/>
    <property type="project" value="UniProtKB-SubCell"/>
</dbReference>
<dbReference type="GO" id="GO:0030550">
    <property type="term" value="F:acetylcholine receptor inhibitor activity"/>
    <property type="evidence" value="ECO:0007669"/>
    <property type="project" value="UniProtKB-KW"/>
</dbReference>
<dbReference type="GO" id="GO:0099106">
    <property type="term" value="F:ion channel regulator activity"/>
    <property type="evidence" value="ECO:0007669"/>
    <property type="project" value="UniProtKB-KW"/>
</dbReference>
<dbReference type="GO" id="GO:0090729">
    <property type="term" value="F:toxin activity"/>
    <property type="evidence" value="ECO:0007669"/>
    <property type="project" value="UniProtKB-KW"/>
</dbReference>
<dbReference type="CDD" id="cd00206">
    <property type="entry name" value="TFP_snake_toxin"/>
    <property type="match status" value="1"/>
</dbReference>
<dbReference type="FunFam" id="2.10.60.10:FF:000024">
    <property type="entry name" value="Cytotoxin 1"/>
    <property type="match status" value="1"/>
</dbReference>
<dbReference type="Gene3D" id="2.10.60.10">
    <property type="entry name" value="CD59"/>
    <property type="match status" value="1"/>
</dbReference>
<dbReference type="InterPro" id="IPR003571">
    <property type="entry name" value="Snake_3FTx"/>
</dbReference>
<dbReference type="InterPro" id="IPR045860">
    <property type="entry name" value="Snake_toxin-like_sf"/>
</dbReference>
<dbReference type="InterPro" id="IPR018354">
    <property type="entry name" value="Snake_toxin_con_site"/>
</dbReference>
<dbReference type="InterPro" id="IPR054131">
    <property type="entry name" value="Toxin_cobra-type"/>
</dbReference>
<dbReference type="Pfam" id="PF21947">
    <property type="entry name" value="Toxin_cobra-type"/>
    <property type="match status" value="1"/>
</dbReference>
<dbReference type="SUPFAM" id="SSF57302">
    <property type="entry name" value="Snake toxin-like"/>
    <property type="match status" value="1"/>
</dbReference>
<dbReference type="PROSITE" id="PS00272">
    <property type="entry name" value="SNAKE_TOXIN"/>
    <property type="match status" value="1"/>
</dbReference>
<comment type="function">
    <text evidence="2">Binds to muscle nicotinic acetylcholine receptor (nAChR) and inhibit acetylcholine from binding to the receptor, thereby impairing neuromuscular transmission.</text>
</comment>
<comment type="subcellular location">
    <subcellularLocation>
        <location evidence="4">Secreted</location>
    </subcellularLocation>
</comment>
<comment type="tissue specificity">
    <text evidence="5">Expressed by the venom gland.</text>
</comment>
<comment type="similarity">
    <text evidence="5">Belongs to the three-finger toxin family. Short-chain subfamily. Type I alpha-neurotoxin sub-subfamily.</text>
</comment>
<accession>P01424</accession>
<name>3S11_NAJME</name>
<organism>
    <name type="scientific">Naja melanoleuca</name>
    <name type="common">Forest cobra</name>
    <name type="synonym">Black-lipped cobra</name>
    <dbReference type="NCBI Taxonomy" id="8643"/>
    <lineage>
        <taxon>Eukaryota</taxon>
        <taxon>Metazoa</taxon>
        <taxon>Chordata</taxon>
        <taxon>Craniata</taxon>
        <taxon>Vertebrata</taxon>
        <taxon>Euteleostomi</taxon>
        <taxon>Lepidosauria</taxon>
        <taxon>Squamata</taxon>
        <taxon>Bifurcata</taxon>
        <taxon>Unidentata</taxon>
        <taxon>Episquamata</taxon>
        <taxon>Toxicofera</taxon>
        <taxon>Serpentes</taxon>
        <taxon>Colubroidea</taxon>
        <taxon>Elapidae</taxon>
        <taxon>Elapinae</taxon>
        <taxon>Naja</taxon>
    </lineage>
</organism>
<keyword id="KW-0008">Acetylcholine receptor inhibiting toxin</keyword>
<keyword id="KW-0903">Direct protein sequencing</keyword>
<keyword id="KW-1015">Disulfide bond</keyword>
<keyword id="KW-0872">Ion channel impairing toxin</keyword>
<keyword id="KW-0528">Neurotoxin</keyword>
<keyword id="KW-0629">Postsynaptic neurotoxin</keyword>
<keyword id="KW-0964">Secreted</keyword>
<keyword id="KW-0800">Toxin</keyword>
<feature type="chain" id="PRO_0000093602" description="Short neurotoxin 1" evidence="4">
    <location>
        <begin position="1"/>
        <end position="61"/>
    </location>
</feature>
<feature type="region of interest" description="Disordered" evidence="3">
    <location>
        <begin position="1"/>
        <end position="20"/>
    </location>
</feature>
<feature type="compositionally biased region" description="Polar residues" evidence="3">
    <location>
        <begin position="1"/>
        <end position="16"/>
    </location>
</feature>
<feature type="disulfide bond" evidence="1">
    <location>
        <begin position="3"/>
        <end position="23"/>
    </location>
</feature>
<feature type="disulfide bond" evidence="1">
    <location>
        <begin position="17"/>
        <end position="40"/>
    </location>
</feature>
<feature type="disulfide bond" evidence="1">
    <location>
        <begin position="42"/>
        <end position="53"/>
    </location>
</feature>
<feature type="disulfide bond" evidence="1">
    <location>
        <begin position="54"/>
        <end position="59"/>
    </location>
</feature>
<evidence type="ECO:0000250" key="1">
    <source>
        <dbReference type="UniProtKB" id="P0C1Z0"/>
    </source>
</evidence>
<evidence type="ECO:0000250" key="2">
    <source>
        <dbReference type="UniProtKB" id="P60775"/>
    </source>
</evidence>
<evidence type="ECO:0000256" key="3">
    <source>
        <dbReference type="SAM" id="MobiDB-lite"/>
    </source>
</evidence>
<evidence type="ECO:0000269" key="4">
    <source>
    </source>
</evidence>
<evidence type="ECO:0000305" key="5"/>